<accession>P24510</accession>
<accession>B4IWK6</accession>
<feature type="signal peptide" evidence="2">
    <location>
        <begin position="1"/>
        <end position="21"/>
    </location>
</feature>
<feature type="chain" id="PRO_0000089616" description="Chorion protein S16">
    <location>
        <begin position="22"/>
        <end position="142"/>
    </location>
</feature>
<sequence length="142" mass="15115">MSANYMRLLCLMACCLSICLAYGPVRPIVNRYGRGRVIDVVKPVDTAEAQAAALTNAAGAAAASAKLDGANWYALNRYGWEQGRPLLSKPYGPLDKLYAAALPPRSFVAEIDPVFKKSNYGGLYGDKTITLNTGAKLAVSVA</sequence>
<organism>
    <name type="scientific">Drosophila grimshawi</name>
    <name type="common">Hawaiian fruit fly</name>
    <name type="synonym">Idiomyia grimshawi</name>
    <dbReference type="NCBI Taxonomy" id="7222"/>
    <lineage>
        <taxon>Eukaryota</taxon>
        <taxon>Metazoa</taxon>
        <taxon>Ecdysozoa</taxon>
        <taxon>Arthropoda</taxon>
        <taxon>Hexapoda</taxon>
        <taxon>Insecta</taxon>
        <taxon>Pterygota</taxon>
        <taxon>Neoptera</taxon>
        <taxon>Endopterygota</taxon>
        <taxon>Diptera</taxon>
        <taxon>Brachycera</taxon>
        <taxon>Muscomorpha</taxon>
        <taxon>Ephydroidea</taxon>
        <taxon>Drosophilidae</taxon>
        <taxon>Drosophila</taxon>
        <taxon>Hawaiian Drosophila</taxon>
    </lineage>
</organism>
<comment type="function">
    <text evidence="1">Chorion membrane (egg shell) protein; plays a role in protecting the egg from the environment.</text>
</comment>
<comment type="subcellular location">
    <subcellularLocation>
        <location evidence="1">Secreted</location>
    </subcellularLocation>
</comment>
<comment type="similarity">
    <text evidence="3">Belongs to the chorion protein S16 family.</text>
</comment>
<keyword id="KW-1185">Reference proteome</keyword>
<keyword id="KW-0964">Secreted</keyword>
<keyword id="KW-0732">Signal</keyword>
<dbReference type="EMBL" id="X53422">
    <property type="protein sequence ID" value="CAA37507.1"/>
    <property type="molecule type" value="Genomic_DNA"/>
</dbReference>
<dbReference type="EMBL" id="CH916366">
    <property type="protein sequence ID" value="EDV96232.1"/>
    <property type="molecule type" value="Genomic_DNA"/>
</dbReference>
<dbReference type="PIR" id="B32998">
    <property type="entry name" value="B32998"/>
</dbReference>
<dbReference type="FunCoup" id="P24510">
    <property type="interactions" value="5"/>
</dbReference>
<dbReference type="STRING" id="7222.P24510"/>
<dbReference type="EnsemblMetazoa" id="FBtr0150740">
    <property type="protein sequence ID" value="FBpp0149232"/>
    <property type="gene ID" value="FBgn0012318"/>
</dbReference>
<dbReference type="EnsemblMetazoa" id="XM_001983848.3">
    <property type="protein sequence ID" value="XP_001983884.1"/>
    <property type="gene ID" value="LOC6557087"/>
</dbReference>
<dbReference type="GeneID" id="6557087"/>
<dbReference type="KEGG" id="dgr:6557087"/>
<dbReference type="CTD" id="39001"/>
<dbReference type="eggNOG" id="ENOG502T818">
    <property type="taxonomic scope" value="Eukaryota"/>
</dbReference>
<dbReference type="HOGENOM" id="CLU_153425_0_0_1"/>
<dbReference type="InParanoid" id="P24510"/>
<dbReference type="OMA" id="NRYGWEQ"/>
<dbReference type="OrthoDB" id="8027300at2759"/>
<dbReference type="PhylomeDB" id="P24510"/>
<dbReference type="ChiTaRS" id="Cp16">
    <property type="organism name" value="fly"/>
</dbReference>
<dbReference type="Proteomes" id="UP000001070">
    <property type="component" value="Unassembled WGS sequence"/>
</dbReference>
<dbReference type="GO" id="GO:0042600">
    <property type="term" value="C:egg chorion"/>
    <property type="evidence" value="ECO:0007669"/>
    <property type="project" value="InterPro"/>
</dbReference>
<dbReference type="GO" id="GO:0005576">
    <property type="term" value="C:extracellular region"/>
    <property type="evidence" value="ECO:0007669"/>
    <property type="project" value="UniProtKB-SubCell"/>
</dbReference>
<dbReference type="GO" id="GO:0007304">
    <property type="term" value="P:chorion-containing eggshell formation"/>
    <property type="evidence" value="ECO:0007669"/>
    <property type="project" value="EnsemblMetazoa"/>
</dbReference>
<dbReference type="GO" id="GO:0046843">
    <property type="term" value="P:dorsal appendage formation"/>
    <property type="evidence" value="ECO:0007669"/>
    <property type="project" value="EnsemblMetazoa"/>
</dbReference>
<dbReference type="InterPro" id="IPR008450">
    <property type="entry name" value="Chorion_S16"/>
</dbReference>
<dbReference type="Pfam" id="PF05836">
    <property type="entry name" value="Chorion_S16"/>
    <property type="match status" value="1"/>
</dbReference>
<gene>
    <name type="primary">Cp16</name>
    <name type="synonym">S16</name>
    <name type="ORF">GH15326</name>
</gene>
<evidence type="ECO:0000250" key="1"/>
<evidence type="ECO:0000255" key="2"/>
<evidence type="ECO:0000305" key="3"/>
<proteinExistence type="inferred from homology"/>
<protein>
    <recommendedName>
        <fullName>Chorion protein S16</fullName>
    </recommendedName>
</protein>
<reference key="1">
    <citation type="journal article" date="1989" name="J. Mol. Evol.">
        <title>Evolution of the autosomal chorion cluster in Drosophila. II. Chorion gene expression and sequence comparisons of the s16 and s19 genes in evolutionarily distant species.</title>
        <authorList>
            <person name="Fenerjian M.G."/>
            <person name="Martinez-Cruzado J.C."/>
            <person name="Swimmer C."/>
            <person name="King D."/>
            <person name="Kafatos F.C."/>
        </authorList>
    </citation>
    <scope>NUCLEOTIDE SEQUENCE [GENOMIC DNA]</scope>
</reference>
<reference key="2">
    <citation type="journal article" date="2007" name="Nature">
        <title>Evolution of genes and genomes on the Drosophila phylogeny.</title>
        <authorList>
            <consortium name="Drosophila 12 genomes consortium"/>
        </authorList>
    </citation>
    <scope>NUCLEOTIDE SEQUENCE [LARGE SCALE GENOMIC DNA]</scope>
    <source>
        <strain>Tucson 15287-2541.00</strain>
    </source>
</reference>
<name>CH16_DROGR</name>